<name>FABH_STAEQ</name>
<organism>
    <name type="scientific">Staphylococcus epidermidis (strain ATCC 35984 / DSM 28319 / BCRC 17069 / CCUG 31568 / BM 3577 / RP62A)</name>
    <dbReference type="NCBI Taxonomy" id="176279"/>
    <lineage>
        <taxon>Bacteria</taxon>
        <taxon>Bacillati</taxon>
        <taxon>Bacillota</taxon>
        <taxon>Bacilli</taxon>
        <taxon>Bacillales</taxon>
        <taxon>Staphylococcaceae</taxon>
        <taxon>Staphylococcus</taxon>
    </lineage>
</organism>
<feature type="chain" id="PRO_0000110476" description="Beta-ketoacyl-[acyl-carrier-protein] synthase III">
    <location>
        <begin position="1"/>
        <end position="313"/>
    </location>
</feature>
<feature type="region of interest" description="ACP-binding" evidence="1">
    <location>
        <begin position="239"/>
        <end position="243"/>
    </location>
</feature>
<feature type="active site" evidence="1">
    <location>
        <position position="112"/>
    </location>
</feature>
<feature type="active site" evidence="1">
    <location>
        <position position="238"/>
    </location>
</feature>
<feature type="active site" evidence="1">
    <location>
        <position position="268"/>
    </location>
</feature>
<comment type="function">
    <text evidence="1">Catalyzes the condensation reaction of fatty acid synthesis by the addition to an acyl acceptor of two carbons from malonyl-ACP. Catalyzes the first condensation reaction which initiates fatty acid synthesis and may therefore play a role in governing the total rate of fatty acid production. Possesses both acetoacetyl-ACP synthase and acetyl transacylase activities. Its substrate specificity determines the biosynthesis of branched-chain and/or straight-chain of fatty acids.</text>
</comment>
<comment type="catalytic activity">
    <reaction evidence="1">
        <text>malonyl-[ACP] + acetyl-CoA + H(+) = 3-oxobutanoyl-[ACP] + CO2 + CoA</text>
        <dbReference type="Rhea" id="RHEA:12080"/>
        <dbReference type="Rhea" id="RHEA-COMP:9623"/>
        <dbReference type="Rhea" id="RHEA-COMP:9625"/>
        <dbReference type="ChEBI" id="CHEBI:15378"/>
        <dbReference type="ChEBI" id="CHEBI:16526"/>
        <dbReference type="ChEBI" id="CHEBI:57287"/>
        <dbReference type="ChEBI" id="CHEBI:57288"/>
        <dbReference type="ChEBI" id="CHEBI:78449"/>
        <dbReference type="ChEBI" id="CHEBI:78450"/>
        <dbReference type="EC" id="2.3.1.180"/>
    </reaction>
</comment>
<comment type="pathway">
    <text evidence="1">Lipid metabolism; fatty acid biosynthesis.</text>
</comment>
<comment type="subunit">
    <text evidence="1">Homodimer.</text>
</comment>
<comment type="subcellular location">
    <subcellularLocation>
        <location evidence="1">Cytoplasm</location>
    </subcellularLocation>
</comment>
<comment type="domain">
    <text evidence="1">The last Arg residue of the ACP-binding site is essential for the weak association between ACP/AcpP and FabH.</text>
</comment>
<comment type="similarity">
    <text evidence="1">Belongs to the thiolase-like superfamily. FabH family.</text>
</comment>
<reference key="1">
    <citation type="journal article" date="2005" name="J. Bacteriol.">
        <title>Insights on evolution of virulence and resistance from the complete genome analysis of an early methicillin-resistant Staphylococcus aureus strain and a biofilm-producing methicillin-resistant Staphylococcus epidermidis strain.</title>
        <authorList>
            <person name="Gill S.R."/>
            <person name="Fouts D.E."/>
            <person name="Archer G.L."/>
            <person name="Mongodin E.F."/>
            <person name="DeBoy R.T."/>
            <person name="Ravel J."/>
            <person name="Paulsen I.T."/>
            <person name="Kolonay J.F."/>
            <person name="Brinkac L.M."/>
            <person name="Beanan M.J."/>
            <person name="Dodson R.J."/>
            <person name="Daugherty S.C."/>
            <person name="Madupu R."/>
            <person name="Angiuoli S.V."/>
            <person name="Durkin A.S."/>
            <person name="Haft D.H."/>
            <person name="Vamathevan J.J."/>
            <person name="Khouri H."/>
            <person name="Utterback T.R."/>
            <person name="Lee C."/>
            <person name="Dimitrov G."/>
            <person name="Jiang L."/>
            <person name="Qin H."/>
            <person name="Weidman J."/>
            <person name="Tran K."/>
            <person name="Kang K.H."/>
            <person name="Hance I.R."/>
            <person name="Nelson K.E."/>
            <person name="Fraser C.M."/>
        </authorList>
    </citation>
    <scope>NUCLEOTIDE SEQUENCE [LARGE SCALE GENOMIC DNA]</scope>
    <source>
        <strain>ATCC 35984 / DSM 28319 / BCRC 17069 / CCUG 31568 / BM 3577 / RP62A</strain>
    </source>
</reference>
<evidence type="ECO:0000255" key="1">
    <source>
        <dbReference type="HAMAP-Rule" id="MF_01815"/>
    </source>
</evidence>
<keyword id="KW-0012">Acyltransferase</keyword>
<keyword id="KW-0963">Cytoplasm</keyword>
<keyword id="KW-0275">Fatty acid biosynthesis</keyword>
<keyword id="KW-0276">Fatty acid metabolism</keyword>
<keyword id="KW-0444">Lipid biosynthesis</keyword>
<keyword id="KW-0443">Lipid metabolism</keyword>
<keyword id="KW-0511">Multifunctional enzyme</keyword>
<keyword id="KW-1185">Reference proteome</keyword>
<keyword id="KW-0808">Transferase</keyword>
<sequence>MNVGIKGFGAYAPKNIIDNAYFEQFLETSDEWISKMTGIKERHWADEDQDTSDLAYNASIKAIEDAGIQPVDIDMIIVATATGDMPFPSVANILQERLGTGKVATMDQLAACSGFMYSMITAKQYIQSGDYKHILVVGADKLSKITDMTDRSTAVLFGDGAGAVVMGEVAEGRGIISYEMGSDGSGGKYLYLDRETGKLKMNGREVFKFAVRIMGDASTRVVEKAGLSSEDIDLFVPHQANIRIMESARERLGIEREKMSVSVNKYGNTSAASIPLSINQELQNGKIKDDDTLVLVGFGGGLTWGAIVIKWGK</sequence>
<accession>Q5HQI2</accession>
<dbReference type="EC" id="2.3.1.180" evidence="1"/>
<dbReference type="EMBL" id="CP000029">
    <property type="protein sequence ID" value="AAW53961.1"/>
    <property type="molecule type" value="Genomic_DNA"/>
</dbReference>
<dbReference type="RefSeq" id="WP_001829261.1">
    <property type="nucleotide sequence ID" value="NC_002976.3"/>
</dbReference>
<dbReference type="SMR" id="Q5HQI2"/>
<dbReference type="STRING" id="176279.SERP0567"/>
<dbReference type="KEGG" id="ser:SERP0567"/>
<dbReference type="eggNOG" id="COG0332">
    <property type="taxonomic scope" value="Bacteria"/>
</dbReference>
<dbReference type="HOGENOM" id="CLU_039592_3_1_9"/>
<dbReference type="UniPathway" id="UPA00094"/>
<dbReference type="Proteomes" id="UP000000531">
    <property type="component" value="Chromosome"/>
</dbReference>
<dbReference type="GO" id="GO:0005737">
    <property type="term" value="C:cytoplasm"/>
    <property type="evidence" value="ECO:0007669"/>
    <property type="project" value="UniProtKB-SubCell"/>
</dbReference>
<dbReference type="GO" id="GO:0004315">
    <property type="term" value="F:3-oxoacyl-[acyl-carrier-protein] synthase activity"/>
    <property type="evidence" value="ECO:0007669"/>
    <property type="project" value="InterPro"/>
</dbReference>
<dbReference type="GO" id="GO:0033818">
    <property type="term" value="F:beta-ketoacyl-acyl-carrier-protein synthase III activity"/>
    <property type="evidence" value="ECO:0007669"/>
    <property type="project" value="UniProtKB-UniRule"/>
</dbReference>
<dbReference type="GO" id="GO:0006633">
    <property type="term" value="P:fatty acid biosynthetic process"/>
    <property type="evidence" value="ECO:0007669"/>
    <property type="project" value="UniProtKB-UniRule"/>
</dbReference>
<dbReference type="CDD" id="cd00830">
    <property type="entry name" value="KAS_III"/>
    <property type="match status" value="1"/>
</dbReference>
<dbReference type="FunFam" id="3.40.47.10:FF:000004">
    <property type="entry name" value="3-oxoacyl-[acyl-carrier-protein] synthase 3"/>
    <property type="match status" value="1"/>
</dbReference>
<dbReference type="Gene3D" id="3.40.47.10">
    <property type="match status" value="1"/>
</dbReference>
<dbReference type="HAMAP" id="MF_01815">
    <property type="entry name" value="FabH"/>
    <property type="match status" value="1"/>
</dbReference>
<dbReference type="InterPro" id="IPR013747">
    <property type="entry name" value="ACP_syn_III_C"/>
</dbReference>
<dbReference type="InterPro" id="IPR013751">
    <property type="entry name" value="ACP_syn_III_N"/>
</dbReference>
<dbReference type="InterPro" id="IPR004655">
    <property type="entry name" value="FabH"/>
</dbReference>
<dbReference type="InterPro" id="IPR016039">
    <property type="entry name" value="Thiolase-like"/>
</dbReference>
<dbReference type="NCBIfam" id="TIGR00747">
    <property type="entry name" value="fabH"/>
    <property type="match status" value="1"/>
</dbReference>
<dbReference type="NCBIfam" id="NF006829">
    <property type="entry name" value="PRK09352.1"/>
    <property type="match status" value="1"/>
</dbReference>
<dbReference type="PANTHER" id="PTHR43091">
    <property type="entry name" value="3-OXOACYL-[ACYL-CARRIER-PROTEIN] SYNTHASE"/>
    <property type="match status" value="1"/>
</dbReference>
<dbReference type="PANTHER" id="PTHR43091:SF1">
    <property type="entry name" value="BETA-KETOACYL-[ACYL-CARRIER-PROTEIN] SYNTHASE III, CHLOROPLASTIC"/>
    <property type="match status" value="1"/>
</dbReference>
<dbReference type="Pfam" id="PF08545">
    <property type="entry name" value="ACP_syn_III"/>
    <property type="match status" value="1"/>
</dbReference>
<dbReference type="Pfam" id="PF08541">
    <property type="entry name" value="ACP_syn_III_C"/>
    <property type="match status" value="1"/>
</dbReference>
<dbReference type="SUPFAM" id="SSF53901">
    <property type="entry name" value="Thiolase-like"/>
    <property type="match status" value="1"/>
</dbReference>
<protein>
    <recommendedName>
        <fullName evidence="1">Beta-ketoacyl-[acyl-carrier-protein] synthase III</fullName>
        <shortName evidence="1">Beta-ketoacyl-ACP synthase III</shortName>
        <shortName evidence="1">KAS III</shortName>
        <ecNumber evidence="1">2.3.1.180</ecNumber>
    </recommendedName>
    <alternativeName>
        <fullName evidence="1">3-oxoacyl-[acyl-carrier-protein] synthase 3</fullName>
    </alternativeName>
    <alternativeName>
        <fullName evidence="1">3-oxoacyl-[acyl-carrier-protein] synthase III</fullName>
    </alternativeName>
</protein>
<proteinExistence type="inferred from homology"/>
<gene>
    <name evidence="1" type="primary">fabH</name>
    <name type="ordered locus">SERP0567</name>
</gene>